<organism>
    <name type="scientific">Porphyromonas gingivalis (strain ATCC 33277 / DSM 20709 / CIP 103683 / JCM 12257 / NCTC 11834 / 2561)</name>
    <dbReference type="NCBI Taxonomy" id="431947"/>
    <lineage>
        <taxon>Bacteria</taxon>
        <taxon>Pseudomonadati</taxon>
        <taxon>Bacteroidota</taxon>
        <taxon>Bacteroidia</taxon>
        <taxon>Bacteroidales</taxon>
        <taxon>Porphyromonadaceae</taxon>
        <taxon>Porphyromonas</taxon>
    </lineage>
</organism>
<dbReference type="EC" id="4.1.2.13" evidence="1"/>
<dbReference type="EMBL" id="AP009380">
    <property type="protein sequence ID" value="BAG34214.1"/>
    <property type="molecule type" value="Genomic_DNA"/>
</dbReference>
<dbReference type="RefSeq" id="WP_012458465.1">
    <property type="nucleotide sequence ID" value="NC_010729.1"/>
</dbReference>
<dbReference type="SMR" id="B2RLG9"/>
<dbReference type="GeneID" id="29256860"/>
<dbReference type="KEGG" id="pgn:PGN_1695"/>
<dbReference type="eggNOG" id="COG3588">
    <property type="taxonomic scope" value="Bacteria"/>
</dbReference>
<dbReference type="HOGENOM" id="CLU_081560_0_0_10"/>
<dbReference type="OrthoDB" id="9813469at2"/>
<dbReference type="BioCyc" id="PGIN431947:G1G2V-1903-MONOMER"/>
<dbReference type="UniPathway" id="UPA00109">
    <property type="reaction ID" value="UER00183"/>
</dbReference>
<dbReference type="Proteomes" id="UP000008842">
    <property type="component" value="Chromosome"/>
</dbReference>
<dbReference type="GO" id="GO:0004332">
    <property type="term" value="F:fructose-bisphosphate aldolase activity"/>
    <property type="evidence" value="ECO:0007669"/>
    <property type="project" value="UniProtKB-UniRule"/>
</dbReference>
<dbReference type="GO" id="GO:0006096">
    <property type="term" value="P:glycolytic process"/>
    <property type="evidence" value="ECO:0007669"/>
    <property type="project" value="UniProtKB-UniRule"/>
</dbReference>
<dbReference type="CDD" id="cd00949">
    <property type="entry name" value="FBP_aldolase_I_bact"/>
    <property type="match status" value="1"/>
</dbReference>
<dbReference type="Gene3D" id="3.20.20.70">
    <property type="entry name" value="Aldolase class I"/>
    <property type="match status" value="1"/>
</dbReference>
<dbReference type="HAMAP" id="MF_00729">
    <property type="entry name" value="FBP_aldolase_1"/>
    <property type="match status" value="1"/>
</dbReference>
<dbReference type="InterPro" id="IPR013785">
    <property type="entry name" value="Aldolase_TIM"/>
</dbReference>
<dbReference type="InterPro" id="IPR000741">
    <property type="entry name" value="FBA_I"/>
</dbReference>
<dbReference type="InterPro" id="IPR023014">
    <property type="entry name" value="FBA_I_Gram+-type"/>
</dbReference>
<dbReference type="NCBIfam" id="NF003784">
    <property type="entry name" value="PRK05377.1"/>
    <property type="match status" value="1"/>
</dbReference>
<dbReference type="PANTHER" id="PTHR11627">
    <property type="entry name" value="FRUCTOSE-BISPHOSPHATE ALDOLASE"/>
    <property type="match status" value="1"/>
</dbReference>
<dbReference type="Pfam" id="PF00274">
    <property type="entry name" value="Glycolytic"/>
    <property type="match status" value="1"/>
</dbReference>
<dbReference type="SUPFAM" id="SSF51569">
    <property type="entry name" value="Aldolase"/>
    <property type="match status" value="1"/>
</dbReference>
<gene>
    <name evidence="1" type="primary">fda</name>
    <name type="ordered locus">PGN_1695</name>
</gene>
<reference key="1">
    <citation type="journal article" date="2008" name="DNA Res.">
        <title>Determination of the genome sequence of Porphyromonas gingivalis strain ATCC 33277 and genomic comparison with strain W83 revealed extensive genome rearrangements in P. gingivalis.</title>
        <authorList>
            <person name="Naito M."/>
            <person name="Hirakawa H."/>
            <person name="Yamashita A."/>
            <person name="Ohara N."/>
            <person name="Shoji M."/>
            <person name="Yukitake H."/>
            <person name="Nakayama K."/>
            <person name="Toh H."/>
            <person name="Yoshimura F."/>
            <person name="Kuhara S."/>
            <person name="Hattori M."/>
            <person name="Hayashi T."/>
            <person name="Nakayama K."/>
        </authorList>
    </citation>
    <scope>NUCLEOTIDE SEQUENCE [LARGE SCALE GENOMIC DNA]</scope>
    <source>
        <strain>ATCC 33277 / DSM 20709 / CIP 103683 / JCM 12257 / NCTC 11834 / 2561</strain>
    </source>
</reference>
<protein>
    <recommendedName>
        <fullName evidence="1">Fructose-bisphosphate aldolase class 1</fullName>
        <ecNumber evidence="1">4.1.2.13</ecNumber>
    </recommendedName>
    <alternativeName>
        <fullName>Fructose-bisphosphate aldolase class I</fullName>
        <shortName evidence="1">FBP aldolase</shortName>
    </alternativeName>
</protein>
<keyword id="KW-0324">Glycolysis</keyword>
<keyword id="KW-0456">Lyase</keyword>
<keyword id="KW-0704">Schiff base</keyword>
<name>ALF1_PORG3</name>
<accession>B2RLG9</accession>
<evidence type="ECO:0000255" key="1">
    <source>
        <dbReference type="HAMAP-Rule" id="MF_00729"/>
    </source>
</evidence>
<sequence>MNKEQLQQMRQAPGFVGALDQSGGSTPKALKAYGIQPDAYQSEEEMFDLIHQMRTRMITSPAFATGKIIGVILFERTMRGKIEGMPTADFLWEKRHIVPFLKVDKGLQDEANGVQLMKPFPELGKLCEEAVGYHVFGTKMRSVIKQANEQGIRDIVEQQFQWGKEILSHGLVPILEPEVDIHCPEKAKAEEILKRELLAQLDKMTEPVMLKITIPTVDNFYKEIIEHPMMLRVVALSGGYSREQANELLSRNHGVIASFSRALVEGLSVQQTDAEFNAMLEASIEDVYQASIK</sequence>
<feature type="chain" id="PRO_1000132711" description="Fructose-bisphosphate aldolase class 1">
    <location>
        <begin position="1"/>
        <end position="293"/>
    </location>
</feature>
<feature type="active site" description="Proton acceptor" evidence="1">
    <location>
        <position position="176"/>
    </location>
</feature>
<feature type="active site" description="Schiff-base intermediate with dihydroxyacetone-P" evidence="1">
    <location>
        <position position="211"/>
    </location>
</feature>
<comment type="catalytic activity">
    <reaction evidence="1">
        <text>beta-D-fructose 1,6-bisphosphate = D-glyceraldehyde 3-phosphate + dihydroxyacetone phosphate</text>
        <dbReference type="Rhea" id="RHEA:14729"/>
        <dbReference type="ChEBI" id="CHEBI:32966"/>
        <dbReference type="ChEBI" id="CHEBI:57642"/>
        <dbReference type="ChEBI" id="CHEBI:59776"/>
        <dbReference type="EC" id="4.1.2.13"/>
    </reaction>
</comment>
<comment type="pathway">
    <text evidence="1">Carbohydrate degradation; glycolysis; D-glyceraldehyde 3-phosphate and glycerone phosphate from D-glucose: step 4/4.</text>
</comment>
<comment type="similarity">
    <text evidence="1">Belongs to the class I fructose-bisphosphate aldolase family.</text>
</comment>
<proteinExistence type="inferred from homology"/>